<name>FLUC_GEOSL</name>
<keyword id="KW-0997">Cell inner membrane</keyword>
<keyword id="KW-1003">Cell membrane</keyword>
<keyword id="KW-0407">Ion channel</keyword>
<keyword id="KW-0406">Ion transport</keyword>
<keyword id="KW-0472">Membrane</keyword>
<keyword id="KW-0479">Metal-binding</keyword>
<keyword id="KW-1185">Reference proteome</keyword>
<keyword id="KW-0915">Sodium</keyword>
<keyword id="KW-0812">Transmembrane</keyword>
<keyword id="KW-1133">Transmembrane helix</keyword>
<keyword id="KW-0813">Transport</keyword>
<organism>
    <name type="scientific">Geobacter sulfurreducens (strain ATCC 51573 / DSM 12127 / PCA)</name>
    <dbReference type="NCBI Taxonomy" id="243231"/>
    <lineage>
        <taxon>Bacteria</taxon>
        <taxon>Pseudomonadati</taxon>
        <taxon>Thermodesulfobacteriota</taxon>
        <taxon>Desulfuromonadia</taxon>
        <taxon>Geobacterales</taxon>
        <taxon>Geobacteraceae</taxon>
        <taxon>Geobacter</taxon>
    </lineage>
</organism>
<accession>P61389</accession>
<sequence length="124" mass="13051">MTTILAIAVFGAVGCVARYLLAGGVYALAGRAFPWGTLAVNVIGAFLIGLIMEAALRTTLMSQELRLGLTIGFLGGFTTFSTFSYETFKLLEDGEFFSASLNVLASVALCLVGTWAGIMAARQL</sequence>
<feature type="chain" id="PRO_0000110104" description="Fluoride-specific ion channel FluC">
    <location>
        <begin position="1"/>
        <end position="124"/>
    </location>
</feature>
<feature type="transmembrane region" description="Helical" evidence="1">
    <location>
        <begin position="4"/>
        <end position="24"/>
    </location>
</feature>
<feature type="transmembrane region" description="Helical" evidence="1">
    <location>
        <begin position="32"/>
        <end position="52"/>
    </location>
</feature>
<feature type="transmembrane region" description="Helical" evidence="1">
    <location>
        <begin position="68"/>
        <end position="88"/>
    </location>
</feature>
<feature type="transmembrane region" description="Helical" evidence="1">
    <location>
        <begin position="101"/>
        <end position="121"/>
    </location>
</feature>
<feature type="binding site" evidence="1">
    <location>
        <position position="75"/>
    </location>
    <ligand>
        <name>Na(+)</name>
        <dbReference type="ChEBI" id="CHEBI:29101"/>
        <note>structural</note>
    </ligand>
</feature>
<feature type="binding site" evidence="1">
    <location>
        <position position="78"/>
    </location>
    <ligand>
        <name>Na(+)</name>
        <dbReference type="ChEBI" id="CHEBI:29101"/>
        <note>structural</note>
    </ligand>
</feature>
<evidence type="ECO:0000255" key="1">
    <source>
        <dbReference type="HAMAP-Rule" id="MF_00454"/>
    </source>
</evidence>
<proteinExistence type="inferred from homology"/>
<protein>
    <recommendedName>
        <fullName evidence="1">Fluoride-specific ion channel FluC</fullName>
    </recommendedName>
</protein>
<dbReference type="EMBL" id="AE017180">
    <property type="protein sequence ID" value="AAR33834.2"/>
    <property type="molecule type" value="Genomic_DNA"/>
</dbReference>
<dbReference type="RefSeq" id="NP_951561.2">
    <property type="nucleotide sequence ID" value="NC_002939.5"/>
</dbReference>
<dbReference type="RefSeq" id="WP_010941171.1">
    <property type="nucleotide sequence ID" value="NC_002939.5"/>
</dbReference>
<dbReference type="SMR" id="P61389"/>
<dbReference type="FunCoup" id="P61389">
    <property type="interactions" value="313"/>
</dbReference>
<dbReference type="STRING" id="243231.GSU0503"/>
<dbReference type="EnsemblBacteria" id="AAR33834">
    <property type="protein sequence ID" value="AAR33834"/>
    <property type="gene ID" value="GSU0503"/>
</dbReference>
<dbReference type="KEGG" id="gsu:GSU0503"/>
<dbReference type="PATRIC" id="fig|243231.5.peg.504"/>
<dbReference type="eggNOG" id="COG0239">
    <property type="taxonomic scope" value="Bacteria"/>
</dbReference>
<dbReference type="HOGENOM" id="CLU_114342_2_3_7"/>
<dbReference type="InParanoid" id="P61389"/>
<dbReference type="OrthoDB" id="9806299at2"/>
<dbReference type="Proteomes" id="UP000000577">
    <property type="component" value="Chromosome"/>
</dbReference>
<dbReference type="GO" id="GO:0005886">
    <property type="term" value="C:plasma membrane"/>
    <property type="evidence" value="ECO:0000318"/>
    <property type="project" value="GO_Central"/>
</dbReference>
<dbReference type="GO" id="GO:0062054">
    <property type="term" value="F:fluoride channel activity"/>
    <property type="evidence" value="ECO:0007669"/>
    <property type="project" value="UniProtKB-UniRule"/>
</dbReference>
<dbReference type="GO" id="GO:1903425">
    <property type="term" value="F:fluoride transmembrane transporter activity"/>
    <property type="evidence" value="ECO:0000318"/>
    <property type="project" value="GO_Central"/>
</dbReference>
<dbReference type="GO" id="GO:0046872">
    <property type="term" value="F:metal ion binding"/>
    <property type="evidence" value="ECO:0007669"/>
    <property type="project" value="UniProtKB-KW"/>
</dbReference>
<dbReference type="GO" id="GO:0140114">
    <property type="term" value="P:cellular detoxification of fluoride"/>
    <property type="evidence" value="ECO:0007669"/>
    <property type="project" value="UniProtKB-UniRule"/>
</dbReference>
<dbReference type="GO" id="GO:1903424">
    <property type="term" value="P:fluoride transmembrane transport"/>
    <property type="evidence" value="ECO:0000318"/>
    <property type="project" value="GO_Central"/>
</dbReference>
<dbReference type="HAMAP" id="MF_00454">
    <property type="entry name" value="FluC"/>
    <property type="match status" value="1"/>
</dbReference>
<dbReference type="InterPro" id="IPR003691">
    <property type="entry name" value="FluC"/>
</dbReference>
<dbReference type="NCBIfam" id="TIGR00494">
    <property type="entry name" value="crcB"/>
    <property type="match status" value="1"/>
</dbReference>
<dbReference type="PANTHER" id="PTHR28259">
    <property type="entry name" value="FLUORIDE EXPORT PROTEIN 1-RELATED"/>
    <property type="match status" value="1"/>
</dbReference>
<dbReference type="PANTHER" id="PTHR28259:SF1">
    <property type="entry name" value="FLUORIDE EXPORT PROTEIN 1-RELATED"/>
    <property type="match status" value="1"/>
</dbReference>
<dbReference type="Pfam" id="PF02537">
    <property type="entry name" value="CRCB"/>
    <property type="match status" value="1"/>
</dbReference>
<reference key="1">
    <citation type="journal article" date="2003" name="Science">
        <title>Genome of Geobacter sulfurreducens: metal reduction in subsurface environments.</title>
        <authorList>
            <person name="Methe B.A."/>
            <person name="Nelson K.E."/>
            <person name="Eisen J.A."/>
            <person name="Paulsen I.T."/>
            <person name="Nelson W.C."/>
            <person name="Heidelberg J.F."/>
            <person name="Wu D."/>
            <person name="Wu M."/>
            <person name="Ward N.L."/>
            <person name="Beanan M.J."/>
            <person name="Dodson R.J."/>
            <person name="Madupu R."/>
            <person name="Brinkac L.M."/>
            <person name="Daugherty S.C."/>
            <person name="DeBoy R.T."/>
            <person name="Durkin A.S."/>
            <person name="Gwinn M.L."/>
            <person name="Kolonay J.F."/>
            <person name="Sullivan S.A."/>
            <person name="Haft D.H."/>
            <person name="Selengut J."/>
            <person name="Davidsen T.M."/>
            <person name="Zafar N."/>
            <person name="White O."/>
            <person name="Tran B."/>
            <person name="Romero C."/>
            <person name="Forberger H.A."/>
            <person name="Weidman J.F."/>
            <person name="Khouri H.M."/>
            <person name="Feldblyum T.V."/>
            <person name="Utterback T.R."/>
            <person name="Van Aken S.E."/>
            <person name="Lovley D.R."/>
            <person name="Fraser C.M."/>
        </authorList>
    </citation>
    <scope>NUCLEOTIDE SEQUENCE [LARGE SCALE GENOMIC DNA]</scope>
    <source>
        <strain>ATCC 51573 / DSM 12127 / PCA</strain>
    </source>
</reference>
<comment type="function">
    <text evidence="1">Fluoride-specific ion channel. Important for reducing fluoride concentration in the cell, thus reducing its toxicity.</text>
</comment>
<comment type="catalytic activity">
    <reaction evidence="1">
        <text>fluoride(in) = fluoride(out)</text>
        <dbReference type="Rhea" id="RHEA:76159"/>
        <dbReference type="ChEBI" id="CHEBI:17051"/>
    </reaction>
    <physiologicalReaction direction="left-to-right" evidence="1">
        <dbReference type="Rhea" id="RHEA:76160"/>
    </physiologicalReaction>
</comment>
<comment type="activity regulation">
    <text evidence="1">Na(+) is not transported, but it plays an essential structural role and its presence is essential for fluoride channel function.</text>
</comment>
<comment type="subcellular location">
    <subcellularLocation>
        <location evidence="1">Cell inner membrane</location>
        <topology evidence="1">Multi-pass membrane protein</topology>
    </subcellularLocation>
</comment>
<comment type="similarity">
    <text evidence="1">Belongs to the fluoride channel Fluc/FEX (TC 1.A.43) family.</text>
</comment>
<gene>
    <name evidence="1" type="primary">fluC</name>
    <name evidence="1" type="synonym">crcB</name>
    <name type="ordered locus">GSU0503</name>
</gene>